<protein>
    <recommendedName>
        <fullName>Uncharacterized protein AF_1616</fullName>
    </recommendedName>
</protein>
<name>Y1616_ARCFU</name>
<sequence>MVKLSFTLRFGDVWVAENEEIVAKGHSLDELDRNLELELRKAGYKGRVEIFMKFDYSTIPEWMRQFHPHYFNRTVVFDLD</sequence>
<dbReference type="EMBL" id="AE000782">
    <property type="protein sequence ID" value="AAB89631.1"/>
    <property type="molecule type" value="Genomic_DNA"/>
</dbReference>
<dbReference type="PIR" id="G69451">
    <property type="entry name" value="G69451"/>
</dbReference>
<dbReference type="RefSeq" id="WP_010879113.1">
    <property type="nucleotide sequence ID" value="NC_000917.1"/>
</dbReference>
<dbReference type="STRING" id="224325.AF_1616"/>
<dbReference type="PaxDb" id="224325-AF_1616"/>
<dbReference type="EnsemblBacteria" id="AAB89631">
    <property type="protein sequence ID" value="AAB89631"/>
    <property type="gene ID" value="AF_1616"/>
</dbReference>
<dbReference type="GeneID" id="1484841"/>
<dbReference type="KEGG" id="afu:AF_1616"/>
<dbReference type="eggNOG" id="arCOG10395">
    <property type="taxonomic scope" value="Archaea"/>
</dbReference>
<dbReference type="HOGENOM" id="CLU_192947_0_0_2"/>
<dbReference type="OrthoDB" id="379705at2157"/>
<dbReference type="Proteomes" id="UP000002199">
    <property type="component" value="Chromosome"/>
</dbReference>
<dbReference type="InterPro" id="IPR035157">
    <property type="entry name" value="DUF5395"/>
</dbReference>
<dbReference type="Pfam" id="PF17373">
    <property type="entry name" value="DUF5395"/>
    <property type="match status" value="1"/>
</dbReference>
<proteinExistence type="inferred from homology"/>
<accession>O28657</accession>
<evidence type="ECO:0000255" key="1"/>
<organism>
    <name type="scientific">Archaeoglobus fulgidus (strain ATCC 49558 / DSM 4304 / JCM 9628 / NBRC 100126 / VC-16)</name>
    <dbReference type="NCBI Taxonomy" id="224325"/>
    <lineage>
        <taxon>Archaea</taxon>
        <taxon>Methanobacteriati</taxon>
        <taxon>Methanobacteriota</taxon>
        <taxon>Archaeoglobi</taxon>
        <taxon>Archaeoglobales</taxon>
        <taxon>Archaeoglobaceae</taxon>
        <taxon>Archaeoglobus</taxon>
    </lineage>
</organism>
<gene>
    <name type="ordered locus">AF_1616</name>
</gene>
<reference key="1">
    <citation type="journal article" date="1997" name="Nature">
        <title>The complete genome sequence of the hyperthermophilic, sulphate-reducing archaeon Archaeoglobus fulgidus.</title>
        <authorList>
            <person name="Klenk H.-P."/>
            <person name="Clayton R.A."/>
            <person name="Tomb J.-F."/>
            <person name="White O."/>
            <person name="Nelson K.E."/>
            <person name="Ketchum K.A."/>
            <person name="Dodson R.J."/>
            <person name="Gwinn M.L."/>
            <person name="Hickey E.K."/>
            <person name="Peterson J.D."/>
            <person name="Richardson D.L."/>
            <person name="Kerlavage A.R."/>
            <person name="Graham D.E."/>
            <person name="Kyrpides N.C."/>
            <person name="Fleischmann R.D."/>
            <person name="Quackenbush J."/>
            <person name="Lee N.H."/>
            <person name="Sutton G.G."/>
            <person name="Gill S.R."/>
            <person name="Kirkness E.F."/>
            <person name="Dougherty B.A."/>
            <person name="McKenney K."/>
            <person name="Adams M.D."/>
            <person name="Loftus B.J."/>
            <person name="Peterson S.N."/>
            <person name="Reich C.I."/>
            <person name="McNeil L.K."/>
            <person name="Badger J.H."/>
            <person name="Glodek A."/>
            <person name="Zhou L."/>
            <person name="Overbeek R."/>
            <person name="Gocayne J.D."/>
            <person name="Weidman J.F."/>
            <person name="McDonald L.A."/>
            <person name="Utterback T.R."/>
            <person name="Cotton M.D."/>
            <person name="Spriggs T."/>
            <person name="Artiach P."/>
            <person name="Kaine B.P."/>
            <person name="Sykes S.M."/>
            <person name="Sadow P.W."/>
            <person name="D'Andrea K.P."/>
            <person name="Bowman C."/>
            <person name="Fujii C."/>
            <person name="Garland S.A."/>
            <person name="Mason T.M."/>
            <person name="Olsen G.J."/>
            <person name="Fraser C.M."/>
            <person name="Smith H.O."/>
            <person name="Woese C.R."/>
            <person name="Venter J.C."/>
        </authorList>
    </citation>
    <scope>NUCLEOTIDE SEQUENCE [LARGE SCALE GENOMIC DNA]</scope>
    <source>
        <strain>ATCC 49558 / DSM 4304 / JCM 9628 / NBRC 100126 / VC-16</strain>
    </source>
</reference>
<feature type="signal peptide" evidence="1">
    <location>
        <begin position="1"/>
        <end position="15"/>
    </location>
</feature>
<feature type="chain" id="PRO_0000013666" description="Uncharacterized protein AF_1616">
    <location>
        <begin position="16"/>
        <end position="80"/>
    </location>
</feature>
<keyword id="KW-1185">Reference proteome</keyword>
<keyword id="KW-0732">Signal</keyword>